<name>NADA_SHIFL</name>
<reference key="1">
    <citation type="submission" date="2001-07" db="EMBL/GenBank/DDBJ databases">
        <title>Anti-virulence genes from a metabolic pathway that is inactive in Shigella flexneri produce an inhibitor of Shigella pathogenicity.</title>
        <authorList>
            <person name="Schuch R."/>
            <person name="Formal S.B."/>
            <person name="Fernandez R.E."/>
            <person name="McCormick B."/>
            <person name="Kohler H."/>
            <person name="Maurelli A.T."/>
        </authorList>
    </citation>
    <scope>NUCLEOTIDE SEQUENCE [GENOMIC DNA]</scope>
    <source>
        <strain>ATCC 700930 / 2457T / Serotype 2a</strain>
    </source>
</reference>
<reference key="2">
    <citation type="journal article" date="2002" name="Nucleic Acids Res.">
        <title>Genome sequence of Shigella flexneri 2a: insights into pathogenicity through comparison with genomes of Escherichia coli K12 and O157.</title>
        <authorList>
            <person name="Jin Q."/>
            <person name="Yuan Z."/>
            <person name="Xu J."/>
            <person name="Wang Y."/>
            <person name="Shen Y."/>
            <person name="Lu W."/>
            <person name="Wang J."/>
            <person name="Liu H."/>
            <person name="Yang J."/>
            <person name="Yang F."/>
            <person name="Zhang X."/>
            <person name="Zhang J."/>
            <person name="Yang G."/>
            <person name="Wu H."/>
            <person name="Qu D."/>
            <person name="Dong J."/>
            <person name="Sun L."/>
            <person name="Xue Y."/>
            <person name="Zhao A."/>
            <person name="Gao Y."/>
            <person name="Zhu J."/>
            <person name="Kan B."/>
            <person name="Ding K."/>
            <person name="Chen S."/>
            <person name="Cheng H."/>
            <person name="Yao Z."/>
            <person name="He B."/>
            <person name="Chen R."/>
            <person name="Ma D."/>
            <person name="Qiang B."/>
            <person name="Wen Y."/>
            <person name="Hou Y."/>
            <person name="Yu J."/>
        </authorList>
    </citation>
    <scope>NUCLEOTIDE SEQUENCE [LARGE SCALE GENOMIC DNA]</scope>
    <source>
        <strain>301 / Serotype 2a</strain>
    </source>
</reference>
<reference key="3">
    <citation type="journal article" date="2003" name="Infect. Immun.">
        <title>Complete genome sequence and comparative genomics of Shigella flexneri serotype 2a strain 2457T.</title>
        <authorList>
            <person name="Wei J."/>
            <person name="Goldberg M.B."/>
            <person name="Burland V."/>
            <person name="Venkatesan M.M."/>
            <person name="Deng W."/>
            <person name="Fournier G."/>
            <person name="Mayhew G.F."/>
            <person name="Plunkett G. III"/>
            <person name="Rose D.J."/>
            <person name="Darling A."/>
            <person name="Mau B."/>
            <person name="Perna N.T."/>
            <person name="Payne S.M."/>
            <person name="Runyen-Janecky L.J."/>
            <person name="Zhou S."/>
            <person name="Schwartz D.C."/>
            <person name="Blattner F.R."/>
        </authorList>
    </citation>
    <scope>NUCLEOTIDE SEQUENCE [LARGE SCALE GENOMIC DNA]</scope>
    <source>
        <strain>ATCC 700930 / 2457T / Serotype 2a</strain>
    </source>
</reference>
<gene>
    <name evidence="1" type="primary">nadA</name>
    <name type="ordered locus">SF0554</name>
    <name type="ordered locus">S0562</name>
</gene>
<protein>
    <recommendedName>
        <fullName evidence="1">Quinolinate synthase</fullName>
        <ecNumber evidence="1">2.5.1.72</ecNumber>
    </recommendedName>
</protein>
<keyword id="KW-0004">4Fe-4S</keyword>
<keyword id="KW-0963">Cytoplasm</keyword>
<keyword id="KW-0408">Iron</keyword>
<keyword id="KW-0411">Iron-sulfur</keyword>
<keyword id="KW-0479">Metal-binding</keyword>
<keyword id="KW-0662">Pyridine nucleotide biosynthesis</keyword>
<keyword id="KW-1185">Reference proteome</keyword>
<keyword id="KW-0808">Transferase</keyword>
<feature type="chain" id="PRO_0000155772" description="Quinolinate synthase">
    <location>
        <begin position="1"/>
        <end position="347"/>
    </location>
</feature>
<feature type="binding site" evidence="1">
    <location>
        <position position="47"/>
    </location>
    <ligand>
        <name>iminosuccinate</name>
        <dbReference type="ChEBI" id="CHEBI:77875"/>
    </ligand>
</feature>
<feature type="binding site" evidence="1">
    <location>
        <position position="68"/>
    </location>
    <ligand>
        <name>iminosuccinate</name>
        <dbReference type="ChEBI" id="CHEBI:77875"/>
    </ligand>
</feature>
<feature type="binding site" evidence="1">
    <location>
        <position position="113"/>
    </location>
    <ligand>
        <name>[4Fe-4S] cluster</name>
        <dbReference type="ChEBI" id="CHEBI:49883"/>
    </ligand>
</feature>
<feature type="binding site" evidence="1">
    <location>
        <begin position="139"/>
        <end position="141"/>
    </location>
    <ligand>
        <name>iminosuccinate</name>
        <dbReference type="ChEBI" id="CHEBI:77875"/>
    </ligand>
</feature>
<feature type="binding site" evidence="1">
    <location>
        <position position="156"/>
    </location>
    <ligand>
        <name>iminosuccinate</name>
        <dbReference type="ChEBI" id="CHEBI:77875"/>
    </ligand>
</feature>
<feature type="binding site" evidence="1">
    <location>
        <position position="200"/>
    </location>
    <ligand>
        <name>[4Fe-4S] cluster</name>
        <dbReference type="ChEBI" id="CHEBI:49883"/>
    </ligand>
</feature>
<feature type="binding site" evidence="1">
    <location>
        <begin position="226"/>
        <end position="228"/>
    </location>
    <ligand>
        <name>iminosuccinate</name>
        <dbReference type="ChEBI" id="CHEBI:77875"/>
    </ligand>
</feature>
<feature type="binding site" evidence="1">
    <location>
        <position position="243"/>
    </location>
    <ligand>
        <name>iminosuccinate</name>
        <dbReference type="ChEBI" id="CHEBI:77875"/>
    </ligand>
</feature>
<feature type="binding site" evidence="1">
    <location>
        <position position="297"/>
    </location>
    <ligand>
        <name>[4Fe-4S] cluster</name>
        <dbReference type="ChEBI" id="CHEBI:49883"/>
    </ligand>
</feature>
<feature type="sequence conflict" description="In Ref. 1; AAL26997." evidence="2" ref="1">
    <original>Q</original>
    <variation>R</variation>
    <location>
        <position position="271"/>
    </location>
</feature>
<evidence type="ECO:0000255" key="1">
    <source>
        <dbReference type="HAMAP-Rule" id="MF_00567"/>
    </source>
</evidence>
<evidence type="ECO:0000305" key="2"/>
<proteinExistence type="inferred from homology"/>
<organism>
    <name type="scientific">Shigella flexneri</name>
    <dbReference type="NCBI Taxonomy" id="623"/>
    <lineage>
        <taxon>Bacteria</taxon>
        <taxon>Pseudomonadati</taxon>
        <taxon>Pseudomonadota</taxon>
        <taxon>Gammaproteobacteria</taxon>
        <taxon>Enterobacterales</taxon>
        <taxon>Enterobacteriaceae</taxon>
        <taxon>Shigella</taxon>
    </lineage>
</organism>
<sequence>MSVMFDPDTAIYPFPPKPTPLSIDEKAYYREKIKRLLKERNAVMVAHYYTDPEIQQLAEETGGCISDSLEMARFGAKHPASTLLVAGVRFMGETAKILSPEKTILMPTLQVECSLDLGCPVEEFNAFYDAHPDRTVVVYANTSAAVKARADWVVTSSIAVELIDHLDSLGEKIIWAPDKHLGRYVQKQTGGDILCWQGACIVHDEFKTQALTRLQEEYPDAAILVHPESPQAIVDMADAVGSTSQLIAAAKALPHQRLIVATDRGIFYKMQQAVPDKELLEAPTAGEGATCRSCAHCPWMAMNDLQAIAEALEQEGSNHEVHVDERLRERALVPLNRMLDFAATLRG</sequence>
<dbReference type="EC" id="2.5.1.72" evidence="1"/>
<dbReference type="EMBL" id="AF403415">
    <property type="protein sequence ID" value="AAL26997.1"/>
    <property type="molecule type" value="Genomic_DNA"/>
</dbReference>
<dbReference type="EMBL" id="AE005674">
    <property type="protein sequence ID" value="AAN42198.1"/>
    <property type="molecule type" value="Genomic_DNA"/>
</dbReference>
<dbReference type="EMBL" id="AE014073">
    <property type="protein sequence ID" value="AAP16071.1"/>
    <property type="molecule type" value="Genomic_DNA"/>
</dbReference>
<dbReference type="RefSeq" id="NP_706491.1">
    <property type="nucleotide sequence ID" value="NC_004337.2"/>
</dbReference>
<dbReference type="RefSeq" id="WP_000115308.1">
    <property type="nucleotide sequence ID" value="NZ_WPGW01000046.1"/>
</dbReference>
<dbReference type="SMR" id="Q93CP9"/>
<dbReference type="STRING" id="198214.SF0554"/>
<dbReference type="PaxDb" id="198214-SF0554"/>
<dbReference type="GeneID" id="1023452"/>
<dbReference type="KEGG" id="sfl:SF0554"/>
<dbReference type="KEGG" id="sfx:S0562"/>
<dbReference type="PATRIC" id="fig|198214.7.peg.643"/>
<dbReference type="HOGENOM" id="CLU_047382_1_0_6"/>
<dbReference type="UniPathway" id="UPA00253">
    <property type="reaction ID" value="UER00327"/>
</dbReference>
<dbReference type="Proteomes" id="UP000001006">
    <property type="component" value="Chromosome"/>
</dbReference>
<dbReference type="Proteomes" id="UP000002673">
    <property type="component" value="Chromosome"/>
</dbReference>
<dbReference type="GO" id="GO:0005829">
    <property type="term" value="C:cytosol"/>
    <property type="evidence" value="ECO:0007669"/>
    <property type="project" value="TreeGrafter"/>
</dbReference>
<dbReference type="GO" id="GO:0051539">
    <property type="term" value="F:4 iron, 4 sulfur cluster binding"/>
    <property type="evidence" value="ECO:0007669"/>
    <property type="project" value="UniProtKB-KW"/>
</dbReference>
<dbReference type="GO" id="GO:0046872">
    <property type="term" value="F:metal ion binding"/>
    <property type="evidence" value="ECO:0007669"/>
    <property type="project" value="UniProtKB-KW"/>
</dbReference>
<dbReference type="GO" id="GO:0008987">
    <property type="term" value="F:quinolinate synthetase A activity"/>
    <property type="evidence" value="ECO:0007669"/>
    <property type="project" value="UniProtKB-UniRule"/>
</dbReference>
<dbReference type="GO" id="GO:0034628">
    <property type="term" value="P:'de novo' NAD biosynthetic process from L-aspartate"/>
    <property type="evidence" value="ECO:0007669"/>
    <property type="project" value="TreeGrafter"/>
</dbReference>
<dbReference type="FunFam" id="3.40.50.10800:FF:000003">
    <property type="entry name" value="Quinolinate synthase A"/>
    <property type="match status" value="1"/>
</dbReference>
<dbReference type="Gene3D" id="3.40.50.10800">
    <property type="entry name" value="NadA-like"/>
    <property type="match status" value="3"/>
</dbReference>
<dbReference type="HAMAP" id="MF_00567">
    <property type="entry name" value="NadA_type1"/>
    <property type="match status" value="1"/>
</dbReference>
<dbReference type="InterPro" id="IPR003473">
    <property type="entry name" value="NadA"/>
</dbReference>
<dbReference type="InterPro" id="IPR036094">
    <property type="entry name" value="NadA_sf"/>
</dbReference>
<dbReference type="InterPro" id="IPR023513">
    <property type="entry name" value="Quinolinate_synth_A_type1"/>
</dbReference>
<dbReference type="NCBIfam" id="TIGR00550">
    <property type="entry name" value="nadA"/>
    <property type="match status" value="1"/>
</dbReference>
<dbReference type="NCBIfam" id="NF006877">
    <property type="entry name" value="PRK09375.1-1"/>
    <property type="match status" value="1"/>
</dbReference>
<dbReference type="NCBIfam" id="NF006878">
    <property type="entry name" value="PRK09375.1-2"/>
    <property type="match status" value="1"/>
</dbReference>
<dbReference type="PANTHER" id="PTHR30573:SF0">
    <property type="entry name" value="QUINOLINATE SYNTHASE, CHLOROPLASTIC"/>
    <property type="match status" value="1"/>
</dbReference>
<dbReference type="PANTHER" id="PTHR30573">
    <property type="entry name" value="QUINOLINATE SYNTHETASE A"/>
    <property type="match status" value="1"/>
</dbReference>
<dbReference type="Pfam" id="PF02445">
    <property type="entry name" value="NadA"/>
    <property type="match status" value="1"/>
</dbReference>
<dbReference type="SUPFAM" id="SSF142754">
    <property type="entry name" value="NadA-like"/>
    <property type="match status" value="1"/>
</dbReference>
<comment type="function">
    <text evidence="1">Catalyzes the condensation of iminoaspartate with dihydroxyacetone phosphate to form quinolinate.</text>
</comment>
<comment type="catalytic activity">
    <reaction evidence="1">
        <text>iminosuccinate + dihydroxyacetone phosphate = quinolinate + phosphate + 2 H2O + H(+)</text>
        <dbReference type="Rhea" id="RHEA:25888"/>
        <dbReference type="ChEBI" id="CHEBI:15377"/>
        <dbReference type="ChEBI" id="CHEBI:15378"/>
        <dbReference type="ChEBI" id="CHEBI:29959"/>
        <dbReference type="ChEBI" id="CHEBI:43474"/>
        <dbReference type="ChEBI" id="CHEBI:57642"/>
        <dbReference type="ChEBI" id="CHEBI:77875"/>
        <dbReference type="EC" id="2.5.1.72"/>
    </reaction>
    <physiologicalReaction direction="left-to-right" evidence="1">
        <dbReference type="Rhea" id="RHEA:25889"/>
    </physiologicalReaction>
</comment>
<comment type="cofactor">
    <cofactor evidence="1">
        <name>[4Fe-4S] cluster</name>
        <dbReference type="ChEBI" id="CHEBI:49883"/>
    </cofactor>
    <text evidence="1">Binds 1 [4Fe-4S] cluster per subunit.</text>
</comment>
<comment type="pathway">
    <text evidence="1">Cofactor biosynthesis; NAD(+) biosynthesis; quinolinate from iminoaspartate: step 1/1.</text>
</comment>
<comment type="subcellular location">
    <subcellularLocation>
        <location evidence="1">Cytoplasm</location>
    </subcellularLocation>
</comment>
<comment type="similarity">
    <text evidence="1">Belongs to the quinolinate synthase family. Type 1 subfamily.</text>
</comment>
<accession>Q93CP9</accession>